<evidence type="ECO:0000255" key="1">
    <source>
        <dbReference type="HAMAP-Rule" id="MF_02204"/>
    </source>
</evidence>
<evidence type="ECO:0000305" key="2"/>
<reference key="1">
    <citation type="journal article" date="2002" name="Proc. Natl. Acad. Sci. U.S.A.">
        <title>The genome sequence of the facultative intracellular pathogen Brucella melitensis.</title>
        <authorList>
            <person name="DelVecchio V.G."/>
            <person name="Kapatral V."/>
            <person name="Redkar R.J."/>
            <person name="Patra G."/>
            <person name="Mujer C."/>
            <person name="Los T."/>
            <person name="Ivanova N."/>
            <person name="Anderson I."/>
            <person name="Bhattacharyya A."/>
            <person name="Lykidis A."/>
            <person name="Reznik G."/>
            <person name="Jablonski L."/>
            <person name="Larsen N."/>
            <person name="D'Souza M."/>
            <person name="Bernal A."/>
            <person name="Mazur M."/>
            <person name="Goltsman E."/>
            <person name="Selkov E."/>
            <person name="Elzer P.H."/>
            <person name="Hagius S."/>
            <person name="O'Callaghan D."/>
            <person name="Letesson J.-J."/>
            <person name="Haselkorn R."/>
            <person name="Kyrpides N.C."/>
            <person name="Overbeek R."/>
        </authorList>
    </citation>
    <scope>NUCLEOTIDE SEQUENCE [LARGE SCALE GENOMIC DNA]</scope>
    <source>
        <strain>ATCC 23456 / CCUG 17765 / NCTC 10094 / 16M</strain>
    </source>
</reference>
<reference key="2">
    <citation type="submission" date="2001-03" db="EMBL/GenBank/DDBJ databases">
        <title>The tol-pal region in Brucella encodes homologs of the Tol-Pal system of E. coli.</title>
        <authorList>
            <person name="Tibor A."/>
            <person name="Aidant N."/>
            <person name="Letesson J.-J."/>
        </authorList>
    </citation>
    <scope>NUCLEOTIDE SEQUENCE [GENOMIC DNA]</scope>
    <source>
        <strain>ATCC 23456 / CCUG 17765 / NCTC 10094 / 16M</strain>
    </source>
</reference>
<reference key="3">
    <citation type="journal article" date="1999" name="Infect. Immun.">
        <title>Outer membrane proteins Omp10, Omp16, and Omp19 of Brucella spp. are lipoproteins.</title>
        <authorList>
            <person name="Tibor A."/>
            <person name="Decelle B."/>
            <person name="Letesson J.-J."/>
        </authorList>
    </citation>
    <scope>CHARACTERIZATION</scope>
</reference>
<keyword id="KW-0131">Cell cycle</keyword>
<keyword id="KW-0132">Cell division</keyword>
<keyword id="KW-0998">Cell outer membrane</keyword>
<keyword id="KW-0449">Lipoprotein</keyword>
<keyword id="KW-0472">Membrane</keyword>
<keyword id="KW-0564">Palmitate</keyword>
<keyword id="KW-0732">Signal</keyword>
<sequence>MRRIQSIARSPIAIALFMSLAVAGCASKKNLPNNAGDLGLGAGAATPGSSQDFTVNVGDRIFFDLDSSLIRADAQQTLSKQAQWLQRYPQYSITIEGHADERGTREYNLALGQRRAAATRDFLASRGVPTNRMRTISYGNERPVAVCDADTCWSQNRRAVTVLNGAGR</sequence>
<organism>
    <name type="scientific">Brucella melitensis biotype 1 (strain ATCC 23456 / CCUG 17765 / NCTC 10094 / 16M)</name>
    <dbReference type="NCBI Taxonomy" id="224914"/>
    <lineage>
        <taxon>Bacteria</taxon>
        <taxon>Pseudomonadati</taxon>
        <taxon>Pseudomonadota</taxon>
        <taxon>Alphaproteobacteria</taxon>
        <taxon>Hyphomicrobiales</taxon>
        <taxon>Brucellaceae</taxon>
        <taxon>Brucella/Ochrobactrum group</taxon>
        <taxon>Brucella</taxon>
    </lineage>
</organism>
<proteinExistence type="evidence at protein level"/>
<name>PAL_BRUME</name>
<dbReference type="EMBL" id="AF358662">
    <property type="protein sequence ID" value="AAK48919.1"/>
    <property type="molecule type" value="Genomic_DNA"/>
</dbReference>
<dbReference type="EMBL" id="AE008917">
    <property type="protein sequence ID" value="AAL51521.1"/>
    <property type="molecule type" value="Genomic_DNA"/>
</dbReference>
<dbReference type="PIR" id="AF3294">
    <property type="entry name" value="AF3294"/>
</dbReference>
<dbReference type="RefSeq" id="WP_002966947.1">
    <property type="nucleotide sequence ID" value="NZ_GG703781.1"/>
</dbReference>
<dbReference type="SMR" id="P0A3S7"/>
<dbReference type="GeneID" id="97533150"/>
<dbReference type="KEGG" id="bme:BMEI0340"/>
<dbReference type="KEGG" id="bmel:DK63_1094"/>
<dbReference type="PATRIC" id="fig|224914.52.peg.1152"/>
<dbReference type="eggNOG" id="COG2885">
    <property type="taxonomic scope" value="Bacteria"/>
</dbReference>
<dbReference type="PhylomeDB" id="P0A3S7"/>
<dbReference type="Proteomes" id="UP000000419">
    <property type="component" value="Chromosome I"/>
</dbReference>
<dbReference type="GO" id="GO:0009279">
    <property type="term" value="C:cell outer membrane"/>
    <property type="evidence" value="ECO:0007669"/>
    <property type="project" value="UniProtKB-SubCell"/>
</dbReference>
<dbReference type="GO" id="GO:0051301">
    <property type="term" value="P:cell division"/>
    <property type="evidence" value="ECO:0007669"/>
    <property type="project" value="UniProtKB-UniRule"/>
</dbReference>
<dbReference type="CDD" id="cd07185">
    <property type="entry name" value="OmpA_C-like"/>
    <property type="match status" value="1"/>
</dbReference>
<dbReference type="Gene3D" id="3.30.1330.60">
    <property type="entry name" value="OmpA-like domain"/>
    <property type="match status" value="1"/>
</dbReference>
<dbReference type="HAMAP" id="MF_02204">
    <property type="entry name" value="Pal"/>
    <property type="match status" value="1"/>
</dbReference>
<dbReference type="InterPro" id="IPR050330">
    <property type="entry name" value="Bact_OuterMem_StrucFunc"/>
</dbReference>
<dbReference type="InterPro" id="IPR006664">
    <property type="entry name" value="OMP_bac"/>
</dbReference>
<dbReference type="InterPro" id="IPR006665">
    <property type="entry name" value="OmpA-like"/>
</dbReference>
<dbReference type="InterPro" id="IPR006690">
    <property type="entry name" value="OMPA-like_CS"/>
</dbReference>
<dbReference type="InterPro" id="IPR036737">
    <property type="entry name" value="OmpA-like_sf"/>
</dbReference>
<dbReference type="InterPro" id="IPR039001">
    <property type="entry name" value="Pal"/>
</dbReference>
<dbReference type="InterPro" id="IPR014169">
    <property type="entry name" value="Pal_lipo_C"/>
</dbReference>
<dbReference type="NCBIfam" id="TIGR02802">
    <property type="entry name" value="Pal_lipo"/>
    <property type="match status" value="1"/>
</dbReference>
<dbReference type="PANTHER" id="PTHR30329:SF21">
    <property type="entry name" value="LIPOPROTEIN YIAD-RELATED"/>
    <property type="match status" value="1"/>
</dbReference>
<dbReference type="PANTHER" id="PTHR30329">
    <property type="entry name" value="STATOR ELEMENT OF FLAGELLAR MOTOR COMPLEX"/>
    <property type="match status" value="1"/>
</dbReference>
<dbReference type="Pfam" id="PF00691">
    <property type="entry name" value="OmpA"/>
    <property type="match status" value="1"/>
</dbReference>
<dbReference type="PRINTS" id="PR01021">
    <property type="entry name" value="OMPADOMAIN"/>
</dbReference>
<dbReference type="SUPFAM" id="SSF103088">
    <property type="entry name" value="OmpA-like"/>
    <property type="match status" value="1"/>
</dbReference>
<dbReference type="PROSITE" id="PS01068">
    <property type="entry name" value="OMPA_1"/>
    <property type="match status" value="1"/>
</dbReference>
<dbReference type="PROSITE" id="PS51123">
    <property type="entry name" value="OMPA_2"/>
    <property type="match status" value="1"/>
</dbReference>
<dbReference type="PROSITE" id="PS51257">
    <property type="entry name" value="PROKAR_LIPOPROTEIN"/>
    <property type="match status" value="1"/>
</dbReference>
<protein>
    <recommendedName>
        <fullName evidence="1">Peptidoglycan-associated lipoprotein</fullName>
        <shortName evidence="1">PAL</shortName>
    </recommendedName>
    <alternativeName>
        <fullName>16.5 kDa minor OMP</fullName>
        <shortName>16 kDa OMP</shortName>
    </alternativeName>
    <alternativeName>
        <fullName>Minor outer membrane protein Omp16</fullName>
    </alternativeName>
    <alternativeName>
        <fullName>Outer membrane lipoprotein Omp16</fullName>
    </alternativeName>
</protein>
<accession>P0A3S7</accession>
<accession>Q44662</accession>
<feature type="signal peptide" evidence="1 2">
    <location>
        <begin position="1"/>
        <end position="24"/>
    </location>
</feature>
<feature type="chain" id="PRO_0000020129" description="Peptidoglycan-associated lipoprotein" evidence="1">
    <location>
        <begin position="25"/>
        <end position="168"/>
    </location>
</feature>
<feature type="domain" description="OmpA-like" evidence="1">
    <location>
        <begin position="51"/>
        <end position="167"/>
    </location>
</feature>
<feature type="lipid moiety-binding region" description="N-palmitoyl cysteine" evidence="1">
    <location>
        <position position="25"/>
    </location>
</feature>
<feature type="lipid moiety-binding region" description="S-diacylglycerol cysteine" evidence="1">
    <location>
        <position position="25"/>
    </location>
</feature>
<comment type="function">
    <text evidence="1">Part of the Tol-Pal system, which plays a role in outer membrane invagination during cell division and is important for maintaining outer membrane integrity.</text>
</comment>
<comment type="subunit">
    <text evidence="1">The Tol-Pal system is composed of five core proteins: the inner membrane proteins TolA, TolQ and TolR, the periplasmic protein TolB and the outer membrane protein Pal. They form a network linking the inner and outer membranes and the peptidoglycan layer.</text>
</comment>
<comment type="subcellular location">
    <subcellularLocation>
        <location evidence="1">Cell outer membrane</location>
        <topology evidence="1">Lipid-anchor</topology>
    </subcellularLocation>
</comment>
<comment type="PTM">
    <text>The N-terminus is blocked.</text>
</comment>
<comment type="similarity">
    <text evidence="1">Belongs to the Pal lipoprotein family.</text>
</comment>
<gene>
    <name evidence="1" type="primary">pal</name>
    <name type="synonym">omp16</name>
    <name type="ordered locus">BMEI0340</name>
</gene>